<proteinExistence type="inferred from homology"/>
<sequence length="297" mass="30933">MSEQISEQSEQNVYGACPPVPAGESSPSAASAPRTKVRTHHLQKWKAEGHKWAMLTVYDYSTARAFDDAGIPVLLVGDSAANVVYGYDTTVPISIDELIPLVRGVVRGAPHALVVADLPFGSYESGPSAALAAATRFMKEAGAHAVKLEGGERVAEQIACLTAAGIPVMAHIGFTPQSVNTLGGFRVQGRGDAAEQTIADAIAVAEAGAFSVVMEMVPAELATQITGKLTIPTIGIGAGPSCDGQVLVWQDMAGLSSGKAPRFVKRYADVGGELRRAAVQYAQDVAGGVFPAEEHCF</sequence>
<reference key="1">
    <citation type="journal article" date="2007" name="Genome Res.">
        <title>Reductive evolution and niche adaptation inferred from the genome of Mycobacterium ulcerans, the causative agent of Buruli ulcer.</title>
        <authorList>
            <person name="Stinear T.P."/>
            <person name="Seemann T."/>
            <person name="Pidot S."/>
            <person name="Frigui W."/>
            <person name="Reysset G."/>
            <person name="Garnier T."/>
            <person name="Meurice G."/>
            <person name="Simon D."/>
            <person name="Bouchier C."/>
            <person name="Ma L."/>
            <person name="Tichit M."/>
            <person name="Porter J.L."/>
            <person name="Ryan J."/>
            <person name="Johnson P.D.R."/>
            <person name="Davies J.K."/>
            <person name="Jenkin G.A."/>
            <person name="Small P.L.C."/>
            <person name="Jones L.M."/>
            <person name="Tekaia F."/>
            <person name="Laval F."/>
            <person name="Daffe M."/>
            <person name="Parkhill J."/>
            <person name="Cole S.T."/>
        </authorList>
    </citation>
    <scope>NUCLEOTIDE SEQUENCE [LARGE SCALE GENOMIC DNA]</scope>
    <source>
        <strain>Agy99</strain>
    </source>
</reference>
<protein>
    <recommendedName>
        <fullName evidence="1">3-methyl-2-oxobutanoate hydroxymethyltransferase</fullName>
        <ecNumber evidence="1">2.1.2.11</ecNumber>
    </recommendedName>
    <alternativeName>
        <fullName evidence="1">Ketopantoate hydroxymethyltransferase</fullName>
        <shortName evidence="1">KPHMT</shortName>
    </alternativeName>
</protein>
<keyword id="KW-0963">Cytoplasm</keyword>
<keyword id="KW-0460">Magnesium</keyword>
<keyword id="KW-0479">Metal-binding</keyword>
<keyword id="KW-0566">Pantothenate biosynthesis</keyword>
<keyword id="KW-0808">Transferase</keyword>
<dbReference type="EC" id="2.1.2.11" evidence="1"/>
<dbReference type="EMBL" id="CP000325">
    <property type="protein sequence ID" value="ABL03885.1"/>
    <property type="molecule type" value="Genomic_DNA"/>
</dbReference>
<dbReference type="SMR" id="A0PNG6"/>
<dbReference type="KEGG" id="mul:MUL_1330"/>
<dbReference type="eggNOG" id="COG0413">
    <property type="taxonomic scope" value="Bacteria"/>
</dbReference>
<dbReference type="HOGENOM" id="CLU_036645_1_0_11"/>
<dbReference type="UniPathway" id="UPA00028">
    <property type="reaction ID" value="UER00003"/>
</dbReference>
<dbReference type="Proteomes" id="UP000000765">
    <property type="component" value="Chromosome"/>
</dbReference>
<dbReference type="GO" id="GO:0005737">
    <property type="term" value="C:cytoplasm"/>
    <property type="evidence" value="ECO:0007669"/>
    <property type="project" value="UniProtKB-SubCell"/>
</dbReference>
<dbReference type="GO" id="GO:0003864">
    <property type="term" value="F:3-methyl-2-oxobutanoate hydroxymethyltransferase activity"/>
    <property type="evidence" value="ECO:0007669"/>
    <property type="project" value="UniProtKB-UniRule"/>
</dbReference>
<dbReference type="GO" id="GO:0000287">
    <property type="term" value="F:magnesium ion binding"/>
    <property type="evidence" value="ECO:0007669"/>
    <property type="project" value="TreeGrafter"/>
</dbReference>
<dbReference type="GO" id="GO:0015940">
    <property type="term" value="P:pantothenate biosynthetic process"/>
    <property type="evidence" value="ECO:0007669"/>
    <property type="project" value="UniProtKB-UniRule"/>
</dbReference>
<dbReference type="CDD" id="cd06557">
    <property type="entry name" value="KPHMT-like"/>
    <property type="match status" value="1"/>
</dbReference>
<dbReference type="FunFam" id="3.20.20.60:FF:000003">
    <property type="entry name" value="3-methyl-2-oxobutanoate hydroxymethyltransferase"/>
    <property type="match status" value="1"/>
</dbReference>
<dbReference type="Gene3D" id="3.20.20.60">
    <property type="entry name" value="Phosphoenolpyruvate-binding domains"/>
    <property type="match status" value="1"/>
</dbReference>
<dbReference type="HAMAP" id="MF_00156">
    <property type="entry name" value="PanB"/>
    <property type="match status" value="1"/>
</dbReference>
<dbReference type="InterPro" id="IPR003700">
    <property type="entry name" value="Pantoate_hydroxy_MeTrfase"/>
</dbReference>
<dbReference type="InterPro" id="IPR015813">
    <property type="entry name" value="Pyrv/PenolPyrv_kinase-like_dom"/>
</dbReference>
<dbReference type="InterPro" id="IPR040442">
    <property type="entry name" value="Pyrv_kinase-like_dom_sf"/>
</dbReference>
<dbReference type="NCBIfam" id="TIGR00222">
    <property type="entry name" value="panB"/>
    <property type="match status" value="1"/>
</dbReference>
<dbReference type="NCBIfam" id="NF001452">
    <property type="entry name" value="PRK00311.1"/>
    <property type="match status" value="1"/>
</dbReference>
<dbReference type="PANTHER" id="PTHR20881">
    <property type="entry name" value="3-METHYL-2-OXOBUTANOATE HYDROXYMETHYLTRANSFERASE"/>
    <property type="match status" value="1"/>
</dbReference>
<dbReference type="PANTHER" id="PTHR20881:SF0">
    <property type="entry name" value="3-METHYL-2-OXOBUTANOATE HYDROXYMETHYLTRANSFERASE"/>
    <property type="match status" value="1"/>
</dbReference>
<dbReference type="Pfam" id="PF02548">
    <property type="entry name" value="Pantoate_transf"/>
    <property type="match status" value="1"/>
</dbReference>
<dbReference type="PIRSF" id="PIRSF000388">
    <property type="entry name" value="Pantoate_hydroxy_MeTrfase"/>
    <property type="match status" value="1"/>
</dbReference>
<dbReference type="SUPFAM" id="SSF51621">
    <property type="entry name" value="Phosphoenolpyruvate/pyruvate domain"/>
    <property type="match status" value="1"/>
</dbReference>
<organism>
    <name type="scientific">Mycobacterium ulcerans (strain Agy99)</name>
    <dbReference type="NCBI Taxonomy" id="362242"/>
    <lineage>
        <taxon>Bacteria</taxon>
        <taxon>Bacillati</taxon>
        <taxon>Actinomycetota</taxon>
        <taxon>Actinomycetes</taxon>
        <taxon>Mycobacteriales</taxon>
        <taxon>Mycobacteriaceae</taxon>
        <taxon>Mycobacterium</taxon>
        <taxon>Mycobacterium ulcerans group</taxon>
    </lineage>
</organism>
<feature type="chain" id="PRO_0000297303" description="3-methyl-2-oxobutanoate hydroxymethyltransferase">
    <location>
        <begin position="1"/>
        <end position="297"/>
    </location>
</feature>
<feature type="region of interest" description="Disordered" evidence="2">
    <location>
        <begin position="1"/>
        <end position="36"/>
    </location>
</feature>
<feature type="compositionally biased region" description="Polar residues" evidence="2">
    <location>
        <begin position="1"/>
        <end position="12"/>
    </location>
</feature>
<feature type="compositionally biased region" description="Low complexity" evidence="2">
    <location>
        <begin position="22"/>
        <end position="33"/>
    </location>
</feature>
<feature type="active site" description="Proton acceptor" evidence="1">
    <location>
        <position position="215"/>
    </location>
</feature>
<feature type="binding site" evidence="1">
    <location>
        <begin position="78"/>
        <end position="79"/>
    </location>
    <ligand>
        <name>3-methyl-2-oxobutanoate</name>
        <dbReference type="ChEBI" id="CHEBI:11851"/>
    </ligand>
</feature>
<feature type="binding site" evidence="1">
    <location>
        <position position="78"/>
    </location>
    <ligand>
        <name>Mg(2+)</name>
        <dbReference type="ChEBI" id="CHEBI:18420"/>
    </ligand>
</feature>
<feature type="binding site" evidence="1">
    <location>
        <position position="117"/>
    </location>
    <ligand>
        <name>3-methyl-2-oxobutanoate</name>
        <dbReference type="ChEBI" id="CHEBI:11851"/>
    </ligand>
</feature>
<feature type="binding site" evidence="1">
    <location>
        <position position="117"/>
    </location>
    <ligand>
        <name>Mg(2+)</name>
        <dbReference type="ChEBI" id="CHEBI:18420"/>
    </ligand>
</feature>
<feature type="binding site" evidence="1">
    <location>
        <position position="147"/>
    </location>
    <ligand>
        <name>3-methyl-2-oxobutanoate</name>
        <dbReference type="ChEBI" id="CHEBI:11851"/>
    </ligand>
</feature>
<feature type="binding site" evidence="1">
    <location>
        <position position="149"/>
    </location>
    <ligand>
        <name>Mg(2+)</name>
        <dbReference type="ChEBI" id="CHEBI:18420"/>
    </ligand>
</feature>
<gene>
    <name evidence="1" type="primary">panB</name>
    <name type="ordered locus">MUL_1330</name>
</gene>
<accession>A0PNG6</accession>
<comment type="function">
    <text evidence="1">Catalyzes the reversible reaction in which hydroxymethyl group from 5,10-methylenetetrahydrofolate is transferred onto alpha-ketoisovalerate to form ketopantoate.</text>
</comment>
<comment type="catalytic activity">
    <reaction evidence="1">
        <text>3-methyl-2-oxobutanoate + (6R)-5,10-methylene-5,6,7,8-tetrahydrofolate + H2O = 2-dehydropantoate + (6S)-5,6,7,8-tetrahydrofolate</text>
        <dbReference type="Rhea" id="RHEA:11824"/>
        <dbReference type="ChEBI" id="CHEBI:11561"/>
        <dbReference type="ChEBI" id="CHEBI:11851"/>
        <dbReference type="ChEBI" id="CHEBI:15377"/>
        <dbReference type="ChEBI" id="CHEBI:15636"/>
        <dbReference type="ChEBI" id="CHEBI:57453"/>
        <dbReference type="EC" id="2.1.2.11"/>
    </reaction>
</comment>
<comment type="cofactor">
    <cofactor evidence="1">
        <name>Mg(2+)</name>
        <dbReference type="ChEBI" id="CHEBI:18420"/>
    </cofactor>
    <text evidence="1">Binds 1 Mg(2+) ion per subunit.</text>
</comment>
<comment type="pathway">
    <text evidence="1">Cofactor biosynthesis; (R)-pantothenate biosynthesis; (R)-pantoate from 3-methyl-2-oxobutanoate: step 1/2.</text>
</comment>
<comment type="subunit">
    <text evidence="1">Homodecamer; pentamer of dimers.</text>
</comment>
<comment type="subcellular location">
    <subcellularLocation>
        <location evidence="1">Cytoplasm</location>
    </subcellularLocation>
</comment>
<comment type="similarity">
    <text evidence="1">Belongs to the PanB family.</text>
</comment>
<name>PANB_MYCUA</name>
<evidence type="ECO:0000255" key="1">
    <source>
        <dbReference type="HAMAP-Rule" id="MF_00156"/>
    </source>
</evidence>
<evidence type="ECO:0000256" key="2">
    <source>
        <dbReference type="SAM" id="MobiDB-lite"/>
    </source>
</evidence>